<feature type="chain" id="PRO_0000148167" description="ATP-dependent protease subunit HslV">
    <location>
        <begin position="1"/>
        <end position="178"/>
    </location>
</feature>
<feature type="active site" evidence="1">
    <location>
        <position position="8"/>
    </location>
</feature>
<feature type="binding site" evidence="1">
    <location>
        <position position="163"/>
    </location>
    <ligand>
        <name>Na(+)</name>
        <dbReference type="ChEBI" id="CHEBI:29101"/>
    </ligand>
</feature>
<feature type="binding site" evidence="1">
    <location>
        <position position="166"/>
    </location>
    <ligand>
        <name>Na(+)</name>
        <dbReference type="ChEBI" id="CHEBI:29101"/>
    </ligand>
</feature>
<feature type="binding site" evidence="1">
    <location>
        <position position="169"/>
    </location>
    <ligand>
        <name>Na(+)</name>
        <dbReference type="ChEBI" id="CHEBI:29101"/>
    </ligand>
</feature>
<accession>P65800</accession>
<accession>Q9PD95</accession>
<proteinExistence type="inferred from homology"/>
<name>HSLV_XYLFT</name>
<comment type="function">
    <text evidence="1">Protease subunit of a proteasome-like degradation complex believed to be a general protein degrading machinery.</text>
</comment>
<comment type="catalytic activity">
    <reaction evidence="1">
        <text>ATP-dependent cleavage of peptide bonds with broad specificity.</text>
        <dbReference type="EC" id="3.4.25.2"/>
    </reaction>
</comment>
<comment type="activity regulation">
    <text evidence="1">Allosterically activated by HslU binding.</text>
</comment>
<comment type="subunit">
    <text evidence="1">A double ring-shaped homohexamer of HslV is capped on each side by a ring-shaped HslU homohexamer. The assembly of the HslU/HslV complex is dependent on binding of ATP.</text>
</comment>
<comment type="subcellular location">
    <subcellularLocation>
        <location evidence="1">Cytoplasm</location>
    </subcellularLocation>
</comment>
<comment type="similarity">
    <text evidence="1">Belongs to the peptidase T1B family. HslV subfamily.</text>
</comment>
<keyword id="KW-0021">Allosteric enzyme</keyword>
<keyword id="KW-0963">Cytoplasm</keyword>
<keyword id="KW-0378">Hydrolase</keyword>
<keyword id="KW-0479">Metal-binding</keyword>
<keyword id="KW-0645">Protease</keyword>
<keyword id="KW-1185">Reference proteome</keyword>
<keyword id="KW-0915">Sodium</keyword>
<keyword id="KW-0888">Threonine protease</keyword>
<protein>
    <recommendedName>
        <fullName evidence="1">ATP-dependent protease subunit HslV</fullName>
        <ecNumber evidence="1">3.4.25.2</ecNumber>
    </recommendedName>
</protein>
<reference key="1">
    <citation type="journal article" date="2003" name="J. Bacteriol.">
        <title>Comparative analyses of the complete genome sequences of Pierce's disease and citrus variegated chlorosis strains of Xylella fastidiosa.</title>
        <authorList>
            <person name="Van Sluys M.A."/>
            <person name="de Oliveira M.C."/>
            <person name="Monteiro-Vitorello C.B."/>
            <person name="Miyaki C.Y."/>
            <person name="Furlan L.R."/>
            <person name="Camargo L.E.A."/>
            <person name="da Silva A.C.R."/>
            <person name="Moon D.H."/>
            <person name="Takita M.A."/>
            <person name="Lemos E.G.M."/>
            <person name="Machado M.A."/>
            <person name="Ferro M.I.T."/>
            <person name="da Silva F.R."/>
            <person name="Goldman M.H.S."/>
            <person name="Goldman G.H."/>
            <person name="Lemos M.V.F."/>
            <person name="El-Dorry H."/>
            <person name="Tsai S.M."/>
            <person name="Carrer H."/>
            <person name="Carraro D.M."/>
            <person name="de Oliveira R.C."/>
            <person name="Nunes L.R."/>
            <person name="Siqueira W.J."/>
            <person name="Coutinho L.L."/>
            <person name="Kimura E.T."/>
            <person name="Ferro E.S."/>
            <person name="Harakava R."/>
            <person name="Kuramae E.E."/>
            <person name="Marino C.L."/>
            <person name="Giglioti E."/>
            <person name="Abreu I.L."/>
            <person name="Alves L.M.C."/>
            <person name="do Amaral A.M."/>
            <person name="Baia G.S."/>
            <person name="Blanco S.R."/>
            <person name="Brito M.S."/>
            <person name="Cannavan F.S."/>
            <person name="Celestino A.V."/>
            <person name="da Cunha A.F."/>
            <person name="Fenille R.C."/>
            <person name="Ferro J.A."/>
            <person name="Formighieri E.F."/>
            <person name="Kishi L.T."/>
            <person name="Leoni S.G."/>
            <person name="Oliveira A.R."/>
            <person name="Rosa V.E. Jr."/>
            <person name="Sassaki F.T."/>
            <person name="Sena J.A.D."/>
            <person name="de Souza A.A."/>
            <person name="Truffi D."/>
            <person name="Tsukumo F."/>
            <person name="Yanai G.M."/>
            <person name="Zaros L.G."/>
            <person name="Civerolo E.L."/>
            <person name="Simpson A.J.G."/>
            <person name="Almeida N.F. Jr."/>
            <person name="Setubal J.C."/>
            <person name="Kitajima J.P."/>
        </authorList>
    </citation>
    <scope>NUCLEOTIDE SEQUENCE [LARGE SCALE GENOMIC DNA]</scope>
    <source>
        <strain>Temecula1 / ATCC 700964</strain>
    </source>
</reference>
<evidence type="ECO:0000255" key="1">
    <source>
        <dbReference type="HAMAP-Rule" id="MF_00248"/>
    </source>
</evidence>
<sequence>MSNVFHATTIVCVRRGDKVAIAGDGQVTLGHTVMKSNARKVRRLGRDGQVLAGFAGAAADAFTLFELFEAKLEKHGQLSRAAVELAKDWRTERRLGKLEALLVVADKETSLVISGTGDVIEPEDGIVAIGSGGSYALSAARALMAHTALDARTIATEAIGIAGNICIYTNRNVVVDEL</sequence>
<dbReference type="EC" id="3.4.25.2" evidence="1"/>
<dbReference type="EMBL" id="AE009442">
    <property type="protein sequence ID" value="AAO28572.1"/>
    <property type="molecule type" value="Genomic_DNA"/>
</dbReference>
<dbReference type="SMR" id="P65800"/>
<dbReference type="MEROPS" id="T01.006"/>
<dbReference type="KEGG" id="xft:PD_0701"/>
<dbReference type="HOGENOM" id="CLU_093872_1_0_6"/>
<dbReference type="Proteomes" id="UP000002516">
    <property type="component" value="Chromosome"/>
</dbReference>
<dbReference type="GO" id="GO:0009376">
    <property type="term" value="C:HslUV protease complex"/>
    <property type="evidence" value="ECO:0007669"/>
    <property type="project" value="UniProtKB-UniRule"/>
</dbReference>
<dbReference type="GO" id="GO:0005839">
    <property type="term" value="C:proteasome core complex"/>
    <property type="evidence" value="ECO:0007669"/>
    <property type="project" value="InterPro"/>
</dbReference>
<dbReference type="GO" id="GO:0046872">
    <property type="term" value="F:metal ion binding"/>
    <property type="evidence" value="ECO:0007669"/>
    <property type="project" value="UniProtKB-KW"/>
</dbReference>
<dbReference type="GO" id="GO:0004298">
    <property type="term" value="F:threonine-type endopeptidase activity"/>
    <property type="evidence" value="ECO:0007669"/>
    <property type="project" value="UniProtKB-KW"/>
</dbReference>
<dbReference type="GO" id="GO:0051603">
    <property type="term" value="P:proteolysis involved in protein catabolic process"/>
    <property type="evidence" value="ECO:0007669"/>
    <property type="project" value="InterPro"/>
</dbReference>
<dbReference type="CDD" id="cd01913">
    <property type="entry name" value="protease_HslV"/>
    <property type="match status" value="1"/>
</dbReference>
<dbReference type="Gene3D" id="3.60.20.10">
    <property type="entry name" value="Glutamine Phosphoribosylpyrophosphate, subunit 1, domain 1"/>
    <property type="match status" value="1"/>
</dbReference>
<dbReference type="HAMAP" id="MF_00248">
    <property type="entry name" value="HslV"/>
    <property type="match status" value="1"/>
</dbReference>
<dbReference type="InterPro" id="IPR022281">
    <property type="entry name" value="ATP-dep_Prtase_HsIV_su"/>
</dbReference>
<dbReference type="InterPro" id="IPR029055">
    <property type="entry name" value="Ntn_hydrolases_N"/>
</dbReference>
<dbReference type="InterPro" id="IPR001353">
    <property type="entry name" value="Proteasome_sua/b"/>
</dbReference>
<dbReference type="InterPro" id="IPR023333">
    <property type="entry name" value="Proteasome_suB-type"/>
</dbReference>
<dbReference type="NCBIfam" id="TIGR03692">
    <property type="entry name" value="ATP_dep_HslV"/>
    <property type="match status" value="1"/>
</dbReference>
<dbReference type="NCBIfam" id="NF003964">
    <property type="entry name" value="PRK05456.1"/>
    <property type="match status" value="1"/>
</dbReference>
<dbReference type="PANTHER" id="PTHR32194:SF0">
    <property type="entry name" value="ATP-DEPENDENT PROTEASE SUBUNIT HSLV"/>
    <property type="match status" value="1"/>
</dbReference>
<dbReference type="PANTHER" id="PTHR32194">
    <property type="entry name" value="METALLOPROTEASE TLDD"/>
    <property type="match status" value="1"/>
</dbReference>
<dbReference type="Pfam" id="PF00227">
    <property type="entry name" value="Proteasome"/>
    <property type="match status" value="1"/>
</dbReference>
<dbReference type="PIRSF" id="PIRSF039093">
    <property type="entry name" value="HslV"/>
    <property type="match status" value="1"/>
</dbReference>
<dbReference type="SUPFAM" id="SSF56235">
    <property type="entry name" value="N-terminal nucleophile aminohydrolases (Ntn hydrolases)"/>
    <property type="match status" value="1"/>
</dbReference>
<dbReference type="PROSITE" id="PS51476">
    <property type="entry name" value="PROTEASOME_BETA_2"/>
    <property type="match status" value="1"/>
</dbReference>
<organism>
    <name type="scientific">Xylella fastidiosa (strain Temecula1 / ATCC 700964)</name>
    <dbReference type="NCBI Taxonomy" id="183190"/>
    <lineage>
        <taxon>Bacteria</taxon>
        <taxon>Pseudomonadati</taxon>
        <taxon>Pseudomonadota</taxon>
        <taxon>Gammaproteobacteria</taxon>
        <taxon>Lysobacterales</taxon>
        <taxon>Lysobacteraceae</taxon>
        <taxon>Xylella</taxon>
    </lineage>
</organism>
<gene>
    <name evidence="1" type="primary">hslV</name>
    <name type="ordered locus">PD_0701</name>
</gene>